<feature type="chain" id="PRO_1000205565" description="Large ribosomal subunit protein bL12">
    <location>
        <begin position="1"/>
        <end position="121"/>
    </location>
</feature>
<gene>
    <name evidence="1" type="primary">rplL</name>
    <name type="ordered locus">PC1_0204</name>
</gene>
<proteinExistence type="inferred from homology"/>
<accession>C6DHR4</accession>
<comment type="function">
    <text evidence="1">Forms part of the ribosomal stalk which helps the ribosome interact with GTP-bound translation factors. Is thus essential for accurate translation.</text>
</comment>
<comment type="subunit">
    <text evidence="1">Homodimer. Part of the ribosomal stalk of the 50S ribosomal subunit. Forms a multimeric L10(L12)X complex, where L10 forms an elongated spine to which 2 to 4 L12 dimers bind in a sequential fashion. Binds GTP-bound translation factors.</text>
</comment>
<comment type="similarity">
    <text evidence="1">Belongs to the bacterial ribosomal protein bL12 family.</text>
</comment>
<organism>
    <name type="scientific">Pectobacterium carotovorum subsp. carotovorum (strain PC1)</name>
    <dbReference type="NCBI Taxonomy" id="561230"/>
    <lineage>
        <taxon>Bacteria</taxon>
        <taxon>Pseudomonadati</taxon>
        <taxon>Pseudomonadota</taxon>
        <taxon>Gammaproteobacteria</taxon>
        <taxon>Enterobacterales</taxon>
        <taxon>Pectobacteriaceae</taxon>
        <taxon>Pectobacterium</taxon>
    </lineage>
</organism>
<protein>
    <recommendedName>
        <fullName evidence="1">Large ribosomal subunit protein bL12</fullName>
    </recommendedName>
    <alternativeName>
        <fullName evidence="2">50S ribosomal protein L7/L12</fullName>
    </alternativeName>
</protein>
<sequence length="121" mass="12339">MSITKDQILEAVAAMSVMDVVELVSAMEEKFGVSAAAAVAVAAGPAEVAEEKTEFDVVLKGIGANKVAVIKAVRGATGLGLKEAKDLVESAPAVLKEGVSKDDAEALKKSLEEAGAEVEVK</sequence>
<evidence type="ECO:0000255" key="1">
    <source>
        <dbReference type="HAMAP-Rule" id="MF_00368"/>
    </source>
</evidence>
<evidence type="ECO:0000305" key="2"/>
<reference key="1">
    <citation type="submission" date="2009-07" db="EMBL/GenBank/DDBJ databases">
        <title>Complete sequence of Pectobacterium carotovorum subsp. carotovorum PC1.</title>
        <authorList>
            <consortium name="US DOE Joint Genome Institute"/>
            <person name="Lucas S."/>
            <person name="Copeland A."/>
            <person name="Lapidus A."/>
            <person name="Glavina del Rio T."/>
            <person name="Tice H."/>
            <person name="Bruce D."/>
            <person name="Goodwin L."/>
            <person name="Pitluck S."/>
            <person name="Munk A.C."/>
            <person name="Brettin T."/>
            <person name="Detter J.C."/>
            <person name="Han C."/>
            <person name="Tapia R."/>
            <person name="Larimer F."/>
            <person name="Land M."/>
            <person name="Hauser L."/>
            <person name="Kyrpides N."/>
            <person name="Mikhailova N."/>
            <person name="Balakrishnan V."/>
            <person name="Glasner J."/>
            <person name="Perna N.T."/>
        </authorList>
    </citation>
    <scope>NUCLEOTIDE SEQUENCE [LARGE SCALE GENOMIC DNA]</scope>
    <source>
        <strain>PC1</strain>
    </source>
</reference>
<dbReference type="EMBL" id="CP001657">
    <property type="protein sequence ID" value="ACT11264.1"/>
    <property type="molecule type" value="Genomic_DNA"/>
</dbReference>
<dbReference type="RefSeq" id="WP_012772935.1">
    <property type="nucleotide sequence ID" value="NC_012917.1"/>
</dbReference>
<dbReference type="SMR" id="C6DHR4"/>
<dbReference type="STRING" id="561230.PC1_0204"/>
<dbReference type="GeneID" id="67795999"/>
<dbReference type="KEGG" id="pct:PC1_0204"/>
<dbReference type="eggNOG" id="COG0222">
    <property type="taxonomic scope" value="Bacteria"/>
</dbReference>
<dbReference type="HOGENOM" id="CLU_086499_3_2_6"/>
<dbReference type="OrthoDB" id="9811748at2"/>
<dbReference type="Proteomes" id="UP000002736">
    <property type="component" value="Chromosome"/>
</dbReference>
<dbReference type="GO" id="GO:0022625">
    <property type="term" value="C:cytosolic large ribosomal subunit"/>
    <property type="evidence" value="ECO:0007669"/>
    <property type="project" value="TreeGrafter"/>
</dbReference>
<dbReference type="GO" id="GO:0003729">
    <property type="term" value="F:mRNA binding"/>
    <property type="evidence" value="ECO:0007669"/>
    <property type="project" value="TreeGrafter"/>
</dbReference>
<dbReference type="GO" id="GO:0003735">
    <property type="term" value="F:structural constituent of ribosome"/>
    <property type="evidence" value="ECO:0007669"/>
    <property type="project" value="InterPro"/>
</dbReference>
<dbReference type="GO" id="GO:0006412">
    <property type="term" value="P:translation"/>
    <property type="evidence" value="ECO:0007669"/>
    <property type="project" value="UniProtKB-UniRule"/>
</dbReference>
<dbReference type="CDD" id="cd00387">
    <property type="entry name" value="Ribosomal_L7_L12"/>
    <property type="match status" value="1"/>
</dbReference>
<dbReference type="FunFam" id="1.20.5.710:FF:000001">
    <property type="entry name" value="50S ribosomal protein L7/L12"/>
    <property type="match status" value="1"/>
</dbReference>
<dbReference type="FunFam" id="3.30.1390.10:FF:000001">
    <property type="entry name" value="50S ribosomal protein L7/L12"/>
    <property type="match status" value="1"/>
</dbReference>
<dbReference type="Gene3D" id="3.30.1390.10">
    <property type="match status" value="1"/>
</dbReference>
<dbReference type="Gene3D" id="1.20.5.710">
    <property type="entry name" value="Single helix bin"/>
    <property type="match status" value="1"/>
</dbReference>
<dbReference type="HAMAP" id="MF_00368">
    <property type="entry name" value="Ribosomal_bL12"/>
    <property type="match status" value="1"/>
</dbReference>
<dbReference type="InterPro" id="IPR000206">
    <property type="entry name" value="Ribosomal_bL12"/>
</dbReference>
<dbReference type="InterPro" id="IPR013823">
    <property type="entry name" value="Ribosomal_bL12_C"/>
</dbReference>
<dbReference type="InterPro" id="IPR014719">
    <property type="entry name" value="Ribosomal_bL12_C/ClpS-like"/>
</dbReference>
<dbReference type="InterPro" id="IPR008932">
    <property type="entry name" value="Ribosomal_bL12_oligo"/>
</dbReference>
<dbReference type="InterPro" id="IPR036235">
    <property type="entry name" value="Ribosomal_bL12_oligo_N_sf"/>
</dbReference>
<dbReference type="NCBIfam" id="TIGR00855">
    <property type="entry name" value="L12"/>
    <property type="match status" value="1"/>
</dbReference>
<dbReference type="PANTHER" id="PTHR45987">
    <property type="entry name" value="39S RIBOSOMAL PROTEIN L12"/>
    <property type="match status" value="1"/>
</dbReference>
<dbReference type="PANTHER" id="PTHR45987:SF4">
    <property type="entry name" value="LARGE RIBOSOMAL SUBUNIT PROTEIN BL12M"/>
    <property type="match status" value="1"/>
</dbReference>
<dbReference type="Pfam" id="PF00542">
    <property type="entry name" value="Ribosomal_L12"/>
    <property type="match status" value="1"/>
</dbReference>
<dbReference type="Pfam" id="PF16320">
    <property type="entry name" value="Ribosomal_L12_N"/>
    <property type="match status" value="1"/>
</dbReference>
<dbReference type="SUPFAM" id="SSF54736">
    <property type="entry name" value="ClpS-like"/>
    <property type="match status" value="1"/>
</dbReference>
<dbReference type="SUPFAM" id="SSF48300">
    <property type="entry name" value="Ribosomal protein L7/12, oligomerisation (N-terminal) domain"/>
    <property type="match status" value="1"/>
</dbReference>
<keyword id="KW-0687">Ribonucleoprotein</keyword>
<keyword id="KW-0689">Ribosomal protein</keyword>
<name>RL7_PECCP</name>